<evidence type="ECO:0000250" key="1"/>
<evidence type="ECO:0000255" key="2"/>
<evidence type="ECO:0000255" key="3">
    <source>
        <dbReference type="PROSITE-ProRule" id="PRU01161"/>
    </source>
</evidence>
<evidence type="ECO:0000256" key="4">
    <source>
        <dbReference type="SAM" id="MobiDB-lite"/>
    </source>
</evidence>
<evidence type="ECO:0000305" key="5"/>
<proteinExistence type="inferred from homology"/>
<gene>
    <name type="primary">nte1</name>
    <name type="ORF">AN2481</name>
</gene>
<reference key="1">
    <citation type="journal article" date="2005" name="Nature">
        <title>Sequencing of Aspergillus nidulans and comparative analysis with A. fumigatus and A. oryzae.</title>
        <authorList>
            <person name="Galagan J.E."/>
            <person name="Calvo S.E."/>
            <person name="Cuomo C."/>
            <person name="Ma L.-J."/>
            <person name="Wortman J.R."/>
            <person name="Batzoglou S."/>
            <person name="Lee S.-I."/>
            <person name="Bastuerkmen M."/>
            <person name="Spevak C.C."/>
            <person name="Clutterbuck J."/>
            <person name="Kapitonov V."/>
            <person name="Jurka J."/>
            <person name="Scazzocchio C."/>
            <person name="Farman M.L."/>
            <person name="Butler J."/>
            <person name="Purcell S."/>
            <person name="Harris S."/>
            <person name="Braus G.H."/>
            <person name="Draht O."/>
            <person name="Busch S."/>
            <person name="D'Enfert C."/>
            <person name="Bouchier C."/>
            <person name="Goldman G.H."/>
            <person name="Bell-Pedersen D."/>
            <person name="Griffiths-Jones S."/>
            <person name="Doonan J.H."/>
            <person name="Yu J."/>
            <person name="Vienken K."/>
            <person name="Pain A."/>
            <person name="Freitag M."/>
            <person name="Selker E.U."/>
            <person name="Archer D.B."/>
            <person name="Penalva M.A."/>
            <person name="Oakley B.R."/>
            <person name="Momany M."/>
            <person name="Tanaka T."/>
            <person name="Kumagai T."/>
            <person name="Asai K."/>
            <person name="Machida M."/>
            <person name="Nierman W.C."/>
            <person name="Denning D.W."/>
            <person name="Caddick M.X."/>
            <person name="Hynes M."/>
            <person name="Paoletti M."/>
            <person name="Fischer R."/>
            <person name="Miller B.L."/>
            <person name="Dyer P.S."/>
            <person name="Sachs M.S."/>
            <person name="Osmani S.A."/>
            <person name="Birren B.W."/>
        </authorList>
    </citation>
    <scope>NUCLEOTIDE SEQUENCE [LARGE SCALE GENOMIC DNA]</scope>
    <source>
        <strain>FGSC A4 / ATCC 38163 / CBS 112.46 / NRRL 194 / M139</strain>
    </source>
</reference>
<reference key="2">
    <citation type="journal article" date="2009" name="Fungal Genet. Biol.">
        <title>The 2008 update of the Aspergillus nidulans genome annotation: a community effort.</title>
        <authorList>
            <person name="Wortman J.R."/>
            <person name="Gilsenan J.M."/>
            <person name="Joardar V."/>
            <person name="Deegan J."/>
            <person name="Clutterbuck J."/>
            <person name="Andersen M.R."/>
            <person name="Archer D."/>
            <person name="Bencina M."/>
            <person name="Braus G."/>
            <person name="Coutinho P."/>
            <person name="von Dohren H."/>
            <person name="Doonan J."/>
            <person name="Driessen A.J."/>
            <person name="Durek P."/>
            <person name="Espeso E."/>
            <person name="Fekete E."/>
            <person name="Flipphi M."/>
            <person name="Estrada C.G."/>
            <person name="Geysens S."/>
            <person name="Goldman G."/>
            <person name="de Groot P.W."/>
            <person name="Hansen K."/>
            <person name="Harris S.D."/>
            <person name="Heinekamp T."/>
            <person name="Helmstaedt K."/>
            <person name="Henrissat B."/>
            <person name="Hofmann G."/>
            <person name="Homan T."/>
            <person name="Horio T."/>
            <person name="Horiuchi H."/>
            <person name="James S."/>
            <person name="Jones M."/>
            <person name="Karaffa L."/>
            <person name="Karanyi Z."/>
            <person name="Kato M."/>
            <person name="Keller N."/>
            <person name="Kelly D.E."/>
            <person name="Kiel J.A."/>
            <person name="Kim J.M."/>
            <person name="van der Klei I.J."/>
            <person name="Klis F.M."/>
            <person name="Kovalchuk A."/>
            <person name="Krasevec N."/>
            <person name="Kubicek C.P."/>
            <person name="Liu B."/>
            <person name="Maccabe A."/>
            <person name="Meyer V."/>
            <person name="Mirabito P."/>
            <person name="Miskei M."/>
            <person name="Mos M."/>
            <person name="Mullins J."/>
            <person name="Nelson D.R."/>
            <person name="Nielsen J."/>
            <person name="Oakley B.R."/>
            <person name="Osmani S.A."/>
            <person name="Pakula T."/>
            <person name="Paszewski A."/>
            <person name="Paulsen I."/>
            <person name="Pilsyk S."/>
            <person name="Pocsi I."/>
            <person name="Punt P.J."/>
            <person name="Ram A.F."/>
            <person name="Ren Q."/>
            <person name="Robellet X."/>
            <person name="Robson G."/>
            <person name="Seiboth B."/>
            <person name="van Solingen P."/>
            <person name="Specht T."/>
            <person name="Sun J."/>
            <person name="Taheri-Talesh N."/>
            <person name="Takeshita N."/>
            <person name="Ussery D."/>
            <person name="vanKuyk P.A."/>
            <person name="Visser H."/>
            <person name="van de Vondervoort P.J."/>
            <person name="de Vries R.P."/>
            <person name="Walton J."/>
            <person name="Xiang X."/>
            <person name="Xiong Y."/>
            <person name="Zeng A.P."/>
            <person name="Brandt B.W."/>
            <person name="Cornell M.J."/>
            <person name="van den Hondel C.A."/>
            <person name="Visser J."/>
            <person name="Oliver S.G."/>
            <person name="Turner G."/>
        </authorList>
    </citation>
    <scope>GENOME REANNOTATION</scope>
    <source>
        <strain>FGSC A4 / ATCC 38163 / CBS 112.46 / NRRL 194 / M139</strain>
    </source>
</reference>
<name>NTE1_EMENI</name>
<protein>
    <recommendedName>
        <fullName>Lysophospholipase nte1</fullName>
        <ecNumber>3.1.1.5</ecNumber>
    </recommendedName>
    <alternativeName>
        <fullName>Intracellular phospholipase B</fullName>
    </alternativeName>
    <alternativeName>
        <fullName>Neuropathy target esterase homolog</fullName>
    </alternativeName>
</protein>
<keyword id="KW-0256">Endoplasmic reticulum</keyword>
<keyword id="KW-0378">Hydrolase</keyword>
<keyword id="KW-0442">Lipid degradation</keyword>
<keyword id="KW-0443">Lipid metabolism</keyword>
<keyword id="KW-0472">Membrane</keyword>
<keyword id="KW-1185">Reference proteome</keyword>
<keyword id="KW-0677">Repeat</keyword>
<keyword id="KW-0812">Transmembrane</keyword>
<keyword id="KW-1133">Transmembrane helix</keyword>
<feature type="chain" id="PRO_0000295320" description="Lysophospholipase nte1">
    <location>
        <begin position="1"/>
        <end position="1527"/>
    </location>
</feature>
<feature type="topological domain" description="Cytoplasmic" evidence="1">
    <location>
        <begin position="1"/>
        <end position="73"/>
    </location>
</feature>
<feature type="transmembrane region" description="Helical" evidence="2">
    <location>
        <begin position="74"/>
        <end position="94"/>
    </location>
</feature>
<feature type="topological domain" description="Lumenal" evidence="1">
    <location>
        <begin position="95"/>
        <end position="116"/>
    </location>
</feature>
<feature type="transmembrane region" description="Helical" evidence="2">
    <location>
        <begin position="117"/>
        <end position="137"/>
    </location>
</feature>
<feature type="topological domain" description="Cytoplasmic" evidence="1">
    <location>
        <begin position="138"/>
        <end position="1527"/>
    </location>
</feature>
<feature type="domain" description="PNPLA" evidence="3">
    <location>
        <begin position="1224"/>
        <end position="1388"/>
    </location>
</feature>
<feature type="region of interest" description="Disordered" evidence="4">
    <location>
        <begin position="299"/>
        <end position="387"/>
    </location>
</feature>
<feature type="region of interest" description="Disordered" evidence="4">
    <location>
        <begin position="567"/>
        <end position="596"/>
    </location>
</feature>
<feature type="region of interest" description="Disordered" evidence="4">
    <location>
        <begin position="765"/>
        <end position="785"/>
    </location>
</feature>
<feature type="region of interest" description="Disordered" evidence="4">
    <location>
        <begin position="1504"/>
        <end position="1527"/>
    </location>
</feature>
<feature type="short sequence motif" description="GXGXXG" evidence="3">
    <location>
        <begin position="1228"/>
        <end position="1233"/>
    </location>
</feature>
<feature type="short sequence motif" description="GXSXG" evidence="3">
    <location>
        <begin position="1255"/>
        <end position="1259"/>
    </location>
</feature>
<feature type="short sequence motif" description="DGA/G" evidence="3">
    <location>
        <begin position="1375"/>
        <end position="1377"/>
    </location>
</feature>
<feature type="compositionally biased region" description="Low complexity" evidence="4">
    <location>
        <begin position="299"/>
        <end position="310"/>
    </location>
</feature>
<feature type="compositionally biased region" description="Polar residues" evidence="4">
    <location>
        <begin position="364"/>
        <end position="377"/>
    </location>
</feature>
<feature type="active site" description="Nucleophile" evidence="3">
    <location>
        <position position="1257"/>
    </location>
</feature>
<feature type="active site" description="Proton acceptor" evidence="3">
    <location>
        <position position="1375"/>
    </location>
</feature>
<feature type="binding site">
    <location>
        <begin position="682"/>
        <end position="809"/>
    </location>
    <ligand>
        <name>a nucleoside 3',5'-cyclic phosphate</name>
        <dbReference type="ChEBI" id="CHEBI:58464"/>
        <label>1</label>
    </ligand>
</feature>
<feature type="binding site">
    <location>
        <begin position="846"/>
        <end position="966"/>
    </location>
    <ligand>
        <name>a nucleoside 3',5'-cyclic phosphate</name>
        <dbReference type="ChEBI" id="CHEBI:58464"/>
        <label>2</label>
    </ligand>
</feature>
<organism>
    <name type="scientific">Emericella nidulans (strain FGSC A4 / ATCC 38163 / CBS 112.46 / NRRL 194 / M139)</name>
    <name type="common">Aspergillus nidulans</name>
    <dbReference type="NCBI Taxonomy" id="227321"/>
    <lineage>
        <taxon>Eukaryota</taxon>
        <taxon>Fungi</taxon>
        <taxon>Dikarya</taxon>
        <taxon>Ascomycota</taxon>
        <taxon>Pezizomycotina</taxon>
        <taxon>Eurotiomycetes</taxon>
        <taxon>Eurotiomycetidae</taxon>
        <taxon>Eurotiales</taxon>
        <taxon>Aspergillaceae</taxon>
        <taxon>Aspergillus</taxon>
        <taxon>Aspergillus subgen. Nidulantes</taxon>
    </lineage>
</organism>
<dbReference type="EC" id="3.1.1.5"/>
<dbReference type="EMBL" id="AACD01000041">
    <property type="protein sequence ID" value="EAA63799.1"/>
    <property type="status" value="ALT_SEQ"/>
    <property type="molecule type" value="Genomic_DNA"/>
</dbReference>
<dbReference type="EMBL" id="BN001307">
    <property type="protein sequence ID" value="CBF86943.1"/>
    <property type="status" value="ALT_SEQ"/>
    <property type="molecule type" value="Genomic_DNA"/>
</dbReference>
<dbReference type="RefSeq" id="XP_660085.1">
    <property type="nucleotide sequence ID" value="XM_654993.1"/>
</dbReference>
<dbReference type="SMR" id="Q5BAE9"/>
<dbReference type="FunCoup" id="Q5BAE9">
    <property type="interactions" value="110"/>
</dbReference>
<dbReference type="STRING" id="227321.Q5BAE9"/>
<dbReference type="KEGG" id="ani:ANIA_02481"/>
<dbReference type="VEuPathDB" id="FungiDB:AN2481"/>
<dbReference type="eggNOG" id="KOG2968">
    <property type="taxonomic scope" value="Eukaryota"/>
</dbReference>
<dbReference type="HOGENOM" id="CLU_000960_1_1_1"/>
<dbReference type="InParanoid" id="Q5BAE9"/>
<dbReference type="OrthoDB" id="421051at2759"/>
<dbReference type="Proteomes" id="UP000000560">
    <property type="component" value="Chromosome VII"/>
</dbReference>
<dbReference type="GO" id="GO:0005783">
    <property type="term" value="C:endoplasmic reticulum"/>
    <property type="evidence" value="ECO:0000318"/>
    <property type="project" value="GO_Central"/>
</dbReference>
<dbReference type="GO" id="GO:0005789">
    <property type="term" value="C:endoplasmic reticulum membrane"/>
    <property type="evidence" value="ECO:0007669"/>
    <property type="project" value="UniProtKB-SubCell"/>
</dbReference>
<dbReference type="GO" id="GO:0004622">
    <property type="term" value="F:lysophospholipase activity"/>
    <property type="evidence" value="ECO:0000318"/>
    <property type="project" value="GO_Central"/>
</dbReference>
<dbReference type="GO" id="GO:0016042">
    <property type="term" value="P:lipid catabolic process"/>
    <property type="evidence" value="ECO:0007669"/>
    <property type="project" value="UniProtKB-KW"/>
</dbReference>
<dbReference type="GO" id="GO:0046470">
    <property type="term" value="P:phosphatidylcholine metabolic process"/>
    <property type="evidence" value="ECO:0007669"/>
    <property type="project" value="InterPro"/>
</dbReference>
<dbReference type="CDD" id="cd00038">
    <property type="entry name" value="CAP_ED"/>
    <property type="match status" value="2"/>
</dbReference>
<dbReference type="FunFam" id="2.60.120.10:FF:000062">
    <property type="entry name" value="Lysophospholipase NTE1"/>
    <property type="match status" value="1"/>
</dbReference>
<dbReference type="FunFam" id="3.40.1090.10:FF:000007">
    <property type="entry name" value="Lysophospholipase NTE1"/>
    <property type="match status" value="1"/>
</dbReference>
<dbReference type="FunFam" id="3.40.1090.10:FF:000018">
    <property type="entry name" value="Lysophospholipase NTE1"/>
    <property type="match status" value="1"/>
</dbReference>
<dbReference type="Gene3D" id="3.40.1090.10">
    <property type="entry name" value="Cytosolic phospholipase A2 catalytic domain"/>
    <property type="match status" value="2"/>
</dbReference>
<dbReference type="Gene3D" id="2.60.120.10">
    <property type="entry name" value="Jelly Rolls"/>
    <property type="match status" value="3"/>
</dbReference>
<dbReference type="InterPro" id="IPR016035">
    <property type="entry name" value="Acyl_Trfase/lysoPLipase"/>
</dbReference>
<dbReference type="InterPro" id="IPR000595">
    <property type="entry name" value="cNMP-bd_dom"/>
</dbReference>
<dbReference type="InterPro" id="IPR018490">
    <property type="entry name" value="cNMP-bd_dom_sf"/>
</dbReference>
<dbReference type="InterPro" id="IPR001423">
    <property type="entry name" value="LysoPLipase_patatin_CS"/>
</dbReference>
<dbReference type="InterPro" id="IPR050301">
    <property type="entry name" value="NTE"/>
</dbReference>
<dbReference type="InterPro" id="IPR056556">
    <property type="entry name" value="NTE1_P-loop_dom"/>
</dbReference>
<dbReference type="InterPro" id="IPR002641">
    <property type="entry name" value="PNPLA_dom"/>
</dbReference>
<dbReference type="InterPro" id="IPR014710">
    <property type="entry name" value="RmlC-like_jellyroll"/>
</dbReference>
<dbReference type="PANTHER" id="PTHR14226:SF29">
    <property type="entry name" value="NEUROPATHY TARGET ESTERASE SWS"/>
    <property type="match status" value="1"/>
</dbReference>
<dbReference type="PANTHER" id="PTHR14226">
    <property type="entry name" value="NEUROPATHY TARGET ESTERASE/SWISS CHEESE D.MELANOGASTER"/>
    <property type="match status" value="1"/>
</dbReference>
<dbReference type="Pfam" id="PF00027">
    <property type="entry name" value="cNMP_binding"/>
    <property type="match status" value="1"/>
</dbReference>
<dbReference type="Pfam" id="PF24179">
    <property type="entry name" value="NTE_Ploop"/>
    <property type="match status" value="1"/>
</dbReference>
<dbReference type="Pfam" id="PF01734">
    <property type="entry name" value="Patatin"/>
    <property type="match status" value="1"/>
</dbReference>
<dbReference type="SMART" id="SM00100">
    <property type="entry name" value="cNMP"/>
    <property type="match status" value="2"/>
</dbReference>
<dbReference type="SUPFAM" id="SSF51206">
    <property type="entry name" value="cAMP-binding domain-like"/>
    <property type="match status" value="3"/>
</dbReference>
<dbReference type="SUPFAM" id="SSF52151">
    <property type="entry name" value="FabD/lysophospholipase-like"/>
    <property type="match status" value="1"/>
</dbReference>
<dbReference type="PROSITE" id="PS50042">
    <property type="entry name" value="CNMP_BINDING_3"/>
    <property type="match status" value="2"/>
</dbReference>
<dbReference type="PROSITE" id="PS51635">
    <property type="entry name" value="PNPLA"/>
    <property type="match status" value="1"/>
</dbReference>
<dbReference type="PROSITE" id="PS01237">
    <property type="entry name" value="UPF0028"/>
    <property type="match status" value="1"/>
</dbReference>
<accession>Q5BAE9</accession>
<accession>C8VPA5</accession>
<comment type="function">
    <text evidence="1">Intracellular phospholipase B that catalyzes the double deacylation of phosphatidylcholine (PC) to glycerophosphocholine (GroPCho). Plays an important role in membrane lipid homeostasis. Responsible for the rapid PC turnover in response to inositol, elevated temperatures, or when choline is present in the growth medium (By similarity).</text>
</comment>
<comment type="catalytic activity">
    <reaction>
        <text>a 1-acyl-sn-glycero-3-phosphocholine + H2O = sn-glycerol 3-phosphocholine + a fatty acid + H(+)</text>
        <dbReference type="Rhea" id="RHEA:15177"/>
        <dbReference type="ChEBI" id="CHEBI:15377"/>
        <dbReference type="ChEBI" id="CHEBI:15378"/>
        <dbReference type="ChEBI" id="CHEBI:16870"/>
        <dbReference type="ChEBI" id="CHEBI:28868"/>
        <dbReference type="ChEBI" id="CHEBI:58168"/>
        <dbReference type="EC" id="3.1.1.5"/>
    </reaction>
</comment>
<comment type="activity regulation">
    <text evidence="1">Inhibited by organophosphorus esters.</text>
</comment>
<comment type="subcellular location">
    <subcellularLocation>
        <location evidence="1">Endoplasmic reticulum membrane</location>
        <topology evidence="1">Multi-pass membrane protein</topology>
    </subcellularLocation>
</comment>
<comment type="similarity">
    <text evidence="5">Belongs to the NTE family.</text>
</comment>
<comment type="sequence caution" evidence="5">
    <conflict type="erroneous gene model prediction">
        <sequence resource="EMBL-CDS" id="CBF86943"/>
    </conflict>
</comment>
<comment type="sequence caution" evidence="5">
    <conflict type="erroneous gene model prediction">
        <sequence resource="EMBL-CDS" id="EAA63799"/>
    </conflict>
</comment>
<sequence length="1527" mass="168413">MADSGASVPSPDLPDLDSLHASLSLPDIPSVAATSLSTSLPAISAKVSGFPSFSSHLPPPPLLSPPTPTTMVGWIGWVFSLVFQTIPSVLYWVITFSTITLPTWLFTLFSMSLTFTMNFTTLLLIVLGLVSTVSWFIRYRFLNMYSRLPPEPQRKEPQLDLFPDVQEGDSKPGLANYLDEFLSAIKVFGYLERPVFHELTRTMQTRKLIAGETLQLEEEKGFCLVVDGLVQIFVKSMRSGKHGLNGEVIEGSSDEDDQARDGKQGYQLLTEVKNGASMSSLFSILSLFTEDIRLRASEGSSSSMSSVQPSPARTTPAPFLDSPGEMLNGSPMVLPRDSEVDSSAINGEAEPLPPVPPLHLGESRASSYHPNGQSTASERVRGNRRKSVHPDIVARAMVDTTIAIIPASAFRRLTRLYPRATAHIVQVILTRLQRVTFATAHSYLGLTNEVLGIEKQMTKFTTYDLPNDIRGAALDRLKDKFLKEKDRLGSEEVTRGIALHNPYAGRRRRSMSFVRKEAALKAKMPLPKRPNSLINPERPFHGYDTAGVSPGDLLSTIQLSRFGPRHDQFATTPRLHSPLTEKERSPLRRSSLQRKDSVDEDALFRESILDCIMKGIGLTPSSHNALRKGSHSGELSPKLVSYDSRRQKAVFSNNAFGFIDAYEGSGDGDTESMMSMSVTSAGGTSPIVYLREDLLNDIEIVYFPKGAVLVEQGERHPGLYYVIDGFLDVGVQVNEKGDDLVGASRPGHAQPDEELFPTLKRTQTATSRGATAAAPINESKRKKPSRKSLYMIKPGGMQGYVGAMASYRSYTDVVAKTDVYVGFLPRASLERLAERYPIALLTLAKRLTGLLPRLLLHIDFALEWVQVNAGQVIYHQGDESDAIYITLNGRLRSVHEGKGGKMTVVGEHGQGESVGELEVMTESTRPATLHAIRDTELAKFPRSLFNSLAQEHTGITIQVSKLIAQRMRDLVENPMTEQGEPGNTGSVKTATSTLNLRTVGILPITTGVPVVEFGNRLLSALQQIGVTDGVTSLNQAAILNHLGRHAFSRMGKLKLSQYLADLEEKYGMVLYIADTNVNSPWTQTCISQADCILLVGLAESSPNVGEYERFLLGMKTTARKELVLLHADRYCPPGLTRKWLKNRVWINGGHHHIQMAFRLTAEPSHPQTKRLGTVLKQRVQILQAEIQKYTSRRIRQTPIYSAQTPFKGDFHRLARRLCGRAVGLVLGGGGARGIAHVGVIKALEEAGIPVDIVGGTSIGAFIGGLYARDADVVPMYGRAKKFAGRMGSIWRFALDLTYPSVSYTTGHEFNRGIFKTFGDSQIEDFWLEFYCNTTNISRSRAEYHSSGYVWRYVRASMSLAGLLPPICDEGSMLLDGGYIDNLTVAHMKTLGADVIFAIDVGSIDDNTPQGYGDSLSGMWSVINRWNPFSSIPNPPTLSEIQARLAYVSSIDNLERAKNIPGCLYMRPPIDRYGTLEFGNFDEIYQVGYAYGKEYLQKLKSQGSLPLPEENEEKKKLQRTLAPRRASI</sequence>